<organism>
    <name type="scientific">Homo sapiens</name>
    <name type="common">Human</name>
    <dbReference type="NCBI Taxonomy" id="9606"/>
    <lineage>
        <taxon>Eukaryota</taxon>
        <taxon>Metazoa</taxon>
        <taxon>Chordata</taxon>
        <taxon>Craniata</taxon>
        <taxon>Vertebrata</taxon>
        <taxon>Euteleostomi</taxon>
        <taxon>Mammalia</taxon>
        <taxon>Eutheria</taxon>
        <taxon>Euarchontoglires</taxon>
        <taxon>Primates</taxon>
        <taxon>Haplorrhini</taxon>
        <taxon>Catarrhini</taxon>
        <taxon>Hominidae</taxon>
        <taxon>Homo</taxon>
    </lineage>
</organism>
<accession>Q96HB5</accession>
<accession>A8K5Q5</accession>
<accession>B4DF24</accession>
<accession>B4DFC1</accession>
<accession>B4DTU2</accession>
<accession>F5GZU4</accession>
<feature type="chain" id="PRO_0000254141" description="Coiled-coil domain-containing protein 120">
    <location>
        <begin position="1"/>
        <end position="630"/>
    </location>
</feature>
<feature type="region of interest" description="Involved in CYTH2-binding" evidence="4">
    <location>
        <begin position="31"/>
        <end position="70"/>
    </location>
</feature>
<feature type="region of interest" description="Disordered" evidence="3">
    <location>
        <begin position="212"/>
        <end position="435"/>
    </location>
</feature>
<feature type="region of interest" description="Disordered" evidence="3">
    <location>
        <begin position="457"/>
        <end position="534"/>
    </location>
</feature>
<feature type="coiled-coil region" evidence="2">
    <location>
        <begin position="109"/>
        <end position="173"/>
    </location>
</feature>
<feature type="compositionally biased region" description="Low complexity" evidence="3">
    <location>
        <begin position="212"/>
        <end position="222"/>
    </location>
</feature>
<feature type="compositionally biased region" description="Low complexity" evidence="3">
    <location>
        <begin position="282"/>
        <end position="297"/>
    </location>
</feature>
<feature type="compositionally biased region" description="Polar residues" evidence="3">
    <location>
        <begin position="326"/>
        <end position="335"/>
    </location>
</feature>
<feature type="compositionally biased region" description="Low complexity" evidence="3">
    <location>
        <begin position="421"/>
        <end position="434"/>
    </location>
</feature>
<feature type="modified residue" description="Phosphoserine" evidence="7">
    <location>
        <position position="358"/>
    </location>
</feature>
<feature type="modified residue" description="Phosphoserine" evidence="8 9">
    <location>
        <position position="360"/>
    </location>
</feature>
<feature type="modified residue" description="Omega-N-methylarginine" evidence="1">
    <location>
        <position position="435"/>
    </location>
</feature>
<feature type="splice variant" id="VSP_054527" description="In isoform 4." evidence="6">
    <original>M</original>
    <variation>MRREPRYQGQVGPDIHTDSERTLSSHQPRPLDSTKM</variation>
    <location>
        <position position="1"/>
    </location>
</feature>
<feature type="splice variant" id="VSP_042859" description="In isoform 2 and isoform 5." evidence="6">
    <location>
        <begin position="5"/>
        <end position="16"/>
    </location>
</feature>
<feature type="splice variant" id="VSP_047104" description="In isoform 3, isoform 4 and isoform 5." evidence="6">
    <original>GGCFY</original>
    <variation>YADFLYPPELSARLSDLTLEGEQSSSSDTQTPGTLV</variation>
    <location>
        <begin position="626"/>
        <end position="630"/>
    </location>
</feature>
<evidence type="ECO:0000250" key="1">
    <source>
        <dbReference type="UniProtKB" id="A2AEV7"/>
    </source>
</evidence>
<evidence type="ECO:0000255" key="2"/>
<evidence type="ECO:0000256" key="3">
    <source>
        <dbReference type="SAM" id="MobiDB-lite"/>
    </source>
</evidence>
<evidence type="ECO:0000269" key="4">
    <source>
    </source>
</evidence>
<evidence type="ECO:0000269" key="5">
    <source>
    </source>
</evidence>
<evidence type="ECO:0000303" key="6">
    <source>
    </source>
</evidence>
<evidence type="ECO:0007744" key="7">
    <source>
    </source>
</evidence>
<evidence type="ECO:0007744" key="8">
    <source>
    </source>
</evidence>
<evidence type="ECO:0007744" key="9">
    <source>
    </source>
</evidence>
<dbReference type="EMBL" id="DQ896186">
    <property type="status" value="NOT_ANNOTATED_CDS"/>
    <property type="molecule type" value="mRNA"/>
</dbReference>
<dbReference type="EMBL" id="AK293898">
    <property type="protein sequence ID" value="BAG57285.1"/>
    <property type="molecule type" value="mRNA"/>
</dbReference>
<dbReference type="EMBL" id="AK294024">
    <property type="protein sequence ID" value="BAG57382.1"/>
    <property type="molecule type" value="mRNA"/>
</dbReference>
<dbReference type="EMBL" id="AK291370">
    <property type="protein sequence ID" value="BAF84059.1"/>
    <property type="molecule type" value="mRNA"/>
</dbReference>
<dbReference type="EMBL" id="AK300366">
    <property type="protein sequence ID" value="BAG62104.1"/>
    <property type="molecule type" value="mRNA"/>
</dbReference>
<dbReference type="EMBL" id="AK315837">
    <property type="protein sequence ID" value="BAF98728.1"/>
    <property type="molecule type" value="mRNA"/>
</dbReference>
<dbReference type="EMBL" id="AF196779">
    <property type="status" value="NOT_ANNOTATED_CDS"/>
    <property type="molecule type" value="Genomic_DNA"/>
</dbReference>
<dbReference type="EMBL" id="CH471224">
    <property type="protein sequence ID" value="EAW50708.1"/>
    <property type="molecule type" value="Genomic_DNA"/>
</dbReference>
<dbReference type="EMBL" id="BC008769">
    <property type="protein sequence ID" value="AAH08769.1"/>
    <property type="molecule type" value="mRNA"/>
</dbReference>
<dbReference type="CCDS" id="CCDS14316.1">
    <molecule id="Q96HB5-1"/>
</dbReference>
<dbReference type="CCDS" id="CCDS55413.1">
    <molecule id="Q96HB5-2"/>
</dbReference>
<dbReference type="CCDS" id="CCDS55414.2">
    <molecule id="Q96HB5-4"/>
</dbReference>
<dbReference type="RefSeq" id="NP_001156793.2">
    <molecule id="Q96HB5-4"/>
    <property type="nucleotide sequence ID" value="NM_001163321.4"/>
</dbReference>
<dbReference type="RefSeq" id="NP_001156794.1">
    <molecule id="Q96HB5-5"/>
    <property type="nucleotide sequence ID" value="NM_001163322.2"/>
</dbReference>
<dbReference type="RefSeq" id="NP_001156795.1">
    <molecule id="Q96HB5-2"/>
    <property type="nucleotide sequence ID" value="NM_001163323.3"/>
</dbReference>
<dbReference type="RefSeq" id="NP_001258764.1">
    <molecule id="Q96HB5-1"/>
    <property type="nucleotide sequence ID" value="NM_001271835.1"/>
</dbReference>
<dbReference type="RefSeq" id="NP_001258765.1">
    <molecule id="Q96HB5-1"/>
    <property type="nucleotide sequence ID" value="NM_001271836.2"/>
</dbReference>
<dbReference type="RefSeq" id="NP_296375.1">
    <molecule id="Q96HB5-1"/>
    <property type="nucleotide sequence ID" value="NM_033626.3"/>
</dbReference>
<dbReference type="SMR" id="Q96HB5"/>
<dbReference type="BioGRID" id="124658">
    <property type="interactions" value="177"/>
</dbReference>
<dbReference type="FunCoup" id="Q96HB5">
    <property type="interactions" value="202"/>
</dbReference>
<dbReference type="IntAct" id="Q96HB5">
    <property type="interactions" value="171"/>
</dbReference>
<dbReference type="MINT" id="Q96HB5"/>
<dbReference type="STRING" id="9606.ENSP00000474071"/>
<dbReference type="GlyGen" id="Q96HB5">
    <property type="glycosylation" value="1 site"/>
</dbReference>
<dbReference type="iPTMnet" id="Q96HB5"/>
<dbReference type="PhosphoSitePlus" id="Q96HB5"/>
<dbReference type="BioMuta" id="CCDC120"/>
<dbReference type="DMDM" id="74731908"/>
<dbReference type="jPOST" id="Q96HB5"/>
<dbReference type="MassIVE" id="Q96HB5"/>
<dbReference type="PaxDb" id="9606-ENSP00000474071"/>
<dbReference type="PeptideAtlas" id="Q96HB5"/>
<dbReference type="ProteomicsDB" id="25131"/>
<dbReference type="ProteomicsDB" id="76728">
    <molecule id="Q96HB5-1"/>
</dbReference>
<dbReference type="ProteomicsDB" id="76729">
    <molecule id="Q96HB5-2"/>
</dbReference>
<dbReference type="Antibodypedia" id="347">
    <property type="antibodies" value="112 antibodies from 20 providers"/>
</dbReference>
<dbReference type="DNASU" id="90060"/>
<dbReference type="Ensembl" id="ENST00000496529.6">
    <molecule id="Q96HB5-1"/>
    <property type="protein sequence ID" value="ENSP00000474761.1"/>
    <property type="gene ID" value="ENSG00000147144.13"/>
</dbReference>
<dbReference type="Ensembl" id="ENST00000536628.3">
    <molecule id="Q96HB5-2"/>
    <property type="protein sequence ID" value="ENSP00000443351.1"/>
    <property type="gene ID" value="ENSG00000147144.13"/>
</dbReference>
<dbReference type="Ensembl" id="ENST00000597275.5">
    <molecule id="Q96HB5-1"/>
    <property type="protein sequence ID" value="ENSP00000470294.1"/>
    <property type="gene ID" value="ENSG00000147144.13"/>
</dbReference>
<dbReference type="Ensembl" id="ENST00000603906.2">
    <molecule id="Q96HB5-5"/>
    <property type="protein sequence ID" value="ENSP00000474713.2"/>
    <property type="gene ID" value="ENSG00000147144.13"/>
</dbReference>
<dbReference type="Ensembl" id="ENST00000603986.6">
    <molecule id="Q96HB5-4"/>
    <property type="protein sequence ID" value="ENSP00000474071.1"/>
    <property type="gene ID" value="ENSG00000147144.13"/>
</dbReference>
<dbReference type="Ensembl" id="ENST00000606812.5">
    <molecule id="Q96HB5-1"/>
    <property type="protein sequence ID" value="ENSP00000475676.1"/>
    <property type="gene ID" value="ENSG00000147144.13"/>
</dbReference>
<dbReference type="Ensembl" id="ENST00000710653.1">
    <molecule id="Q96HB5-1"/>
    <property type="protein sequence ID" value="ENSP00000518402.1"/>
    <property type="gene ID" value="ENSG00000292279.1"/>
</dbReference>
<dbReference type="Ensembl" id="ENST00000710666.1">
    <molecule id="Q96HB5-1"/>
    <property type="protein sequence ID" value="ENSP00000518407.1"/>
    <property type="gene ID" value="ENSG00000292279.1"/>
</dbReference>
<dbReference type="Ensembl" id="ENST00000710667.1">
    <molecule id="Q96HB5-1"/>
    <property type="protein sequence ID" value="ENSP00000518408.1"/>
    <property type="gene ID" value="ENSG00000292279.1"/>
</dbReference>
<dbReference type="Ensembl" id="ENST00000710668.1">
    <molecule id="Q96HB5-4"/>
    <property type="protein sequence ID" value="ENSP00000518409.1"/>
    <property type="gene ID" value="ENSG00000292279.1"/>
</dbReference>
<dbReference type="Ensembl" id="ENST00000710669.1">
    <molecule id="Q96HB5-2"/>
    <property type="protein sequence ID" value="ENSP00000518410.1"/>
    <property type="gene ID" value="ENSG00000292279.1"/>
</dbReference>
<dbReference type="Ensembl" id="ENST00000710670.1">
    <molecule id="Q96HB5-5"/>
    <property type="protein sequence ID" value="ENSP00000518411.1"/>
    <property type="gene ID" value="ENSG00000292279.1"/>
</dbReference>
<dbReference type="GeneID" id="90060"/>
<dbReference type="KEGG" id="hsa:90060"/>
<dbReference type="MANE-Select" id="ENST00000603986.6">
    <molecule id="Q96HB5-4"/>
    <property type="protein sequence ID" value="ENSP00000474071.1"/>
    <property type="RefSeq nucleotide sequence ID" value="NM_001163321.4"/>
    <property type="RefSeq protein sequence ID" value="NP_001156793.2"/>
</dbReference>
<dbReference type="UCSC" id="uc064zdh.1">
    <molecule id="Q96HB5-1"/>
    <property type="organism name" value="human"/>
</dbReference>
<dbReference type="AGR" id="HGNC:28910"/>
<dbReference type="CTD" id="90060"/>
<dbReference type="DisGeNET" id="90060"/>
<dbReference type="GeneCards" id="CCDC120"/>
<dbReference type="HGNC" id="HGNC:28910">
    <property type="gene designation" value="CCDC120"/>
</dbReference>
<dbReference type="HPA" id="ENSG00000147144">
    <property type="expression patterns" value="Tissue enhanced (esophagus, skin)"/>
</dbReference>
<dbReference type="MIM" id="300947">
    <property type="type" value="gene"/>
</dbReference>
<dbReference type="neXtProt" id="NX_Q96HB5"/>
<dbReference type="OpenTargets" id="ENSG00000147144"/>
<dbReference type="PharmGKB" id="PA145149329"/>
<dbReference type="VEuPathDB" id="HostDB:ENSG00000147144"/>
<dbReference type="eggNOG" id="KOG3529">
    <property type="taxonomic scope" value="Eukaryota"/>
</dbReference>
<dbReference type="GeneTree" id="ENSGT00940000154102"/>
<dbReference type="HOGENOM" id="CLU_029533_0_0_1"/>
<dbReference type="InParanoid" id="Q96HB5"/>
<dbReference type="OMA" id="CWVINEA"/>
<dbReference type="OrthoDB" id="10063592at2759"/>
<dbReference type="PAN-GO" id="Q96HB5">
    <property type="GO annotations" value="0 GO annotations based on evolutionary models"/>
</dbReference>
<dbReference type="PhylomeDB" id="Q96HB5"/>
<dbReference type="TreeFam" id="TF328984"/>
<dbReference type="PathwayCommons" id="Q96HB5"/>
<dbReference type="SignaLink" id="Q96HB5"/>
<dbReference type="BioGRID-ORCS" id="90060">
    <property type="hits" value="5 hits in 787 CRISPR screens"/>
</dbReference>
<dbReference type="ChiTaRS" id="CCDC120">
    <property type="organism name" value="human"/>
</dbReference>
<dbReference type="GenomeRNAi" id="90060"/>
<dbReference type="Pharos" id="Q96HB5">
    <property type="development level" value="Tbio"/>
</dbReference>
<dbReference type="PRO" id="PR:Q96HB5"/>
<dbReference type="Proteomes" id="UP000005640">
    <property type="component" value="Chromosome X"/>
</dbReference>
<dbReference type="RNAct" id="Q96HB5">
    <property type="molecule type" value="protein"/>
</dbReference>
<dbReference type="Bgee" id="ENSG00000147144">
    <property type="expression patterns" value="Expressed in lower esophagus mucosa and 99 other cell types or tissues"/>
</dbReference>
<dbReference type="ExpressionAtlas" id="Q96HB5">
    <property type="expression patterns" value="baseline and differential"/>
</dbReference>
<dbReference type="GO" id="GO:0120103">
    <property type="term" value="C:centriolar subdistal appendage"/>
    <property type="evidence" value="ECO:0000314"/>
    <property type="project" value="GO_Central"/>
</dbReference>
<dbReference type="GO" id="GO:0005814">
    <property type="term" value="C:centriole"/>
    <property type="evidence" value="ECO:0000314"/>
    <property type="project" value="GO_Central"/>
</dbReference>
<dbReference type="GO" id="GO:0005768">
    <property type="term" value="C:endosome"/>
    <property type="evidence" value="ECO:0007669"/>
    <property type="project" value="UniProtKB-SubCell"/>
</dbReference>
<dbReference type="GO" id="GO:0030426">
    <property type="term" value="C:growth cone"/>
    <property type="evidence" value="ECO:0007669"/>
    <property type="project" value="UniProtKB-SubCell"/>
</dbReference>
<dbReference type="GO" id="GO:0034454">
    <property type="term" value="P:microtubule anchoring at centrosome"/>
    <property type="evidence" value="ECO:0000315"/>
    <property type="project" value="GO_Central"/>
</dbReference>
<dbReference type="GO" id="GO:0008104">
    <property type="term" value="P:protein localization"/>
    <property type="evidence" value="ECO:0000315"/>
    <property type="project" value="GO_Central"/>
</dbReference>
<dbReference type="InterPro" id="IPR043447">
    <property type="entry name" value="CCDC120/INAVA"/>
</dbReference>
<dbReference type="InterPro" id="IPR021774">
    <property type="entry name" value="CUPID"/>
</dbReference>
<dbReference type="PANTHER" id="PTHR16093:SF5">
    <property type="entry name" value="COILED-COIL DOMAIN-CONTAINING PROTEIN 120"/>
    <property type="match status" value="1"/>
</dbReference>
<dbReference type="PANTHER" id="PTHR16093">
    <property type="entry name" value="COILED-COIL DOMAIN-CONTAINING PROTEIN 120 FAMILY MEMBER"/>
    <property type="match status" value="1"/>
</dbReference>
<dbReference type="Pfam" id="PF11819">
    <property type="entry name" value="CUPID"/>
    <property type="match status" value="1"/>
</dbReference>
<sequence length="630" mass="67567">MEVKGQLISSPTFNAPAALFGEAAPQVKSERLRGLLDRQRTLQEALSLKLQELRKVCLQEAELTGQLPPECPLEPGERPQLVRRRPPTARAYPPPHPNQAHHSLCPAEELALEALEREVSVQQQIAAAARRLALAPDLSTEQRRRRRQVQADALRRLHELEEQLRDVRARLGLPVLPLPQPLPLSTGSVITTQGVCLGMRLAQLSQEDVVLHSESSSLSESGASHDNEEPHGCFSLAERPSPPKAWDQLRAVSGGSPERRTPWKPPPSDLYGDLKSRRNSVASPTSPTRSLPRSASSFEGRSVPATPVLTRGAGPQLCKPEGLHSRQWSGSQDSQMGFPRADPASDRASLFVARTRRSNSSEALLVDRAAGGGAGSPPAPLAPSASGPPVCKSSEVLYERPQPTPAFSSRTAGPPDPPRAARPSSAAPASRGAPRLPPVCGDFLLDYSLDRGLPRSGGGTGWGELPPAAEVPGPLSRRDGLLTMLPGPPPVYAADSNSPLLRTKDPHTRATRTKPCGLPPEAAEGPEVHPNPLLWMPPPTRIPSAGERSGHKNLALEGLRDWYIRNSGLAAGPQRRPVLPSVGPPHPPFLHARCYEVGQALYGAPSQAPLPHSRSFTAPPVSGRYGGCFY</sequence>
<protein>
    <recommendedName>
        <fullName>Coiled-coil domain-containing protein 120</fullName>
    </recommendedName>
</protein>
<reference key="1">
    <citation type="submission" date="2006-09" db="EMBL/GenBank/DDBJ databases">
        <title>Cloning of human full-length CDS FLEXGene in Gateway(TM) recombinational vector system.</title>
        <authorList>
            <person name="Rolfs A."/>
            <person name="Kelley F."/>
            <person name="McCarron S."/>
            <person name="Jepson D."/>
            <person name="Shen B."/>
            <person name="Shi Z."/>
            <person name="Hu Y."/>
            <person name="Taycher E."/>
            <person name="Zuo D."/>
            <person name="Ebert L."/>
            <person name="Hoerlein A."/>
            <person name="Ernst U."/>
            <person name="Korn B."/>
            <person name="LaBaer J."/>
        </authorList>
    </citation>
    <scope>NUCLEOTIDE SEQUENCE [LARGE SCALE MRNA] (ISOFORM 1)</scope>
</reference>
<reference key="2">
    <citation type="journal article" date="2004" name="Nat. Genet.">
        <title>Complete sequencing and characterization of 21,243 full-length human cDNAs.</title>
        <authorList>
            <person name="Ota T."/>
            <person name="Suzuki Y."/>
            <person name="Nishikawa T."/>
            <person name="Otsuki T."/>
            <person name="Sugiyama T."/>
            <person name="Irie R."/>
            <person name="Wakamatsu A."/>
            <person name="Hayashi K."/>
            <person name="Sato H."/>
            <person name="Nagai K."/>
            <person name="Kimura K."/>
            <person name="Makita H."/>
            <person name="Sekine M."/>
            <person name="Obayashi M."/>
            <person name="Nishi T."/>
            <person name="Shibahara T."/>
            <person name="Tanaka T."/>
            <person name="Ishii S."/>
            <person name="Yamamoto J."/>
            <person name="Saito K."/>
            <person name="Kawai Y."/>
            <person name="Isono Y."/>
            <person name="Nakamura Y."/>
            <person name="Nagahari K."/>
            <person name="Murakami K."/>
            <person name="Yasuda T."/>
            <person name="Iwayanagi T."/>
            <person name="Wagatsuma M."/>
            <person name="Shiratori A."/>
            <person name="Sudo H."/>
            <person name="Hosoiri T."/>
            <person name="Kaku Y."/>
            <person name="Kodaira H."/>
            <person name="Kondo H."/>
            <person name="Sugawara M."/>
            <person name="Takahashi M."/>
            <person name="Kanda K."/>
            <person name="Yokoi T."/>
            <person name="Furuya T."/>
            <person name="Kikkawa E."/>
            <person name="Omura Y."/>
            <person name="Abe K."/>
            <person name="Kamihara K."/>
            <person name="Katsuta N."/>
            <person name="Sato K."/>
            <person name="Tanikawa M."/>
            <person name="Yamazaki M."/>
            <person name="Ninomiya K."/>
            <person name="Ishibashi T."/>
            <person name="Yamashita H."/>
            <person name="Murakawa K."/>
            <person name="Fujimori K."/>
            <person name="Tanai H."/>
            <person name="Kimata M."/>
            <person name="Watanabe M."/>
            <person name="Hiraoka S."/>
            <person name="Chiba Y."/>
            <person name="Ishida S."/>
            <person name="Ono Y."/>
            <person name="Takiguchi S."/>
            <person name="Watanabe S."/>
            <person name="Yosida M."/>
            <person name="Hotuta T."/>
            <person name="Kusano J."/>
            <person name="Kanehori K."/>
            <person name="Takahashi-Fujii A."/>
            <person name="Hara H."/>
            <person name="Tanase T.-O."/>
            <person name="Nomura Y."/>
            <person name="Togiya S."/>
            <person name="Komai F."/>
            <person name="Hara R."/>
            <person name="Takeuchi K."/>
            <person name="Arita M."/>
            <person name="Imose N."/>
            <person name="Musashino K."/>
            <person name="Yuuki H."/>
            <person name="Oshima A."/>
            <person name="Sasaki N."/>
            <person name="Aotsuka S."/>
            <person name="Yoshikawa Y."/>
            <person name="Matsunawa H."/>
            <person name="Ichihara T."/>
            <person name="Shiohata N."/>
            <person name="Sano S."/>
            <person name="Moriya S."/>
            <person name="Momiyama H."/>
            <person name="Satoh N."/>
            <person name="Takami S."/>
            <person name="Terashima Y."/>
            <person name="Suzuki O."/>
            <person name="Nakagawa S."/>
            <person name="Senoh A."/>
            <person name="Mizoguchi H."/>
            <person name="Goto Y."/>
            <person name="Shimizu F."/>
            <person name="Wakebe H."/>
            <person name="Hishigaki H."/>
            <person name="Watanabe T."/>
            <person name="Sugiyama A."/>
            <person name="Takemoto M."/>
            <person name="Kawakami B."/>
            <person name="Yamazaki M."/>
            <person name="Watanabe K."/>
            <person name="Kumagai A."/>
            <person name="Itakura S."/>
            <person name="Fukuzumi Y."/>
            <person name="Fujimori Y."/>
            <person name="Komiyama M."/>
            <person name="Tashiro H."/>
            <person name="Tanigami A."/>
            <person name="Fujiwara T."/>
            <person name="Ono T."/>
            <person name="Yamada K."/>
            <person name="Fujii Y."/>
            <person name="Ozaki K."/>
            <person name="Hirao M."/>
            <person name="Ohmori Y."/>
            <person name="Kawabata A."/>
            <person name="Hikiji T."/>
            <person name="Kobatake N."/>
            <person name="Inagaki H."/>
            <person name="Ikema Y."/>
            <person name="Okamoto S."/>
            <person name="Okitani R."/>
            <person name="Kawakami T."/>
            <person name="Noguchi S."/>
            <person name="Itoh T."/>
            <person name="Shigeta K."/>
            <person name="Senba T."/>
            <person name="Matsumura K."/>
            <person name="Nakajima Y."/>
            <person name="Mizuno T."/>
            <person name="Morinaga M."/>
            <person name="Sasaki M."/>
            <person name="Togashi T."/>
            <person name="Oyama M."/>
            <person name="Hata H."/>
            <person name="Watanabe M."/>
            <person name="Komatsu T."/>
            <person name="Mizushima-Sugano J."/>
            <person name="Satoh T."/>
            <person name="Shirai Y."/>
            <person name="Takahashi Y."/>
            <person name="Nakagawa K."/>
            <person name="Okumura K."/>
            <person name="Nagase T."/>
            <person name="Nomura N."/>
            <person name="Kikuchi H."/>
            <person name="Masuho Y."/>
            <person name="Yamashita R."/>
            <person name="Nakai K."/>
            <person name="Yada T."/>
            <person name="Nakamura Y."/>
            <person name="Ohara O."/>
            <person name="Isogai T."/>
            <person name="Sugano S."/>
        </authorList>
    </citation>
    <scope>NUCLEOTIDE SEQUENCE [LARGE SCALE MRNA] (ISOFORMS 1; 2; 4 AND 5)</scope>
    <source>
        <tissue>Cerebellum</tissue>
        <tissue>Fetal brain</tissue>
        <tissue>Placenta</tissue>
    </source>
</reference>
<reference key="3">
    <citation type="journal article" date="2005" name="Nature">
        <title>The DNA sequence of the human X chromosome.</title>
        <authorList>
            <person name="Ross M.T."/>
            <person name="Grafham D.V."/>
            <person name="Coffey A.J."/>
            <person name="Scherer S."/>
            <person name="McLay K."/>
            <person name="Muzny D."/>
            <person name="Platzer M."/>
            <person name="Howell G.R."/>
            <person name="Burrows C."/>
            <person name="Bird C.P."/>
            <person name="Frankish A."/>
            <person name="Lovell F.L."/>
            <person name="Howe K.L."/>
            <person name="Ashurst J.L."/>
            <person name="Fulton R.S."/>
            <person name="Sudbrak R."/>
            <person name="Wen G."/>
            <person name="Jones M.C."/>
            <person name="Hurles M.E."/>
            <person name="Andrews T.D."/>
            <person name="Scott C.E."/>
            <person name="Searle S."/>
            <person name="Ramser J."/>
            <person name="Whittaker A."/>
            <person name="Deadman R."/>
            <person name="Carter N.P."/>
            <person name="Hunt S.E."/>
            <person name="Chen R."/>
            <person name="Cree A."/>
            <person name="Gunaratne P."/>
            <person name="Havlak P."/>
            <person name="Hodgson A."/>
            <person name="Metzker M.L."/>
            <person name="Richards S."/>
            <person name="Scott G."/>
            <person name="Steffen D."/>
            <person name="Sodergren E."/>
            <person name="Wheeler D.A."/>
            <person name="Worley K.C."/>
            <person name="Ainscough R."/>
            <person name="Ambrose K.D."/>
            <person name="Ansari-Lari M.A."/>
            <person name="Aradhya S."/>
            <person name="Ashwell R.I."/>
            <person name="Babbage A.K."/>
            <person name="Bagguley C.L."/>
            <person name="Ballabio A."/>
            <person name="Banerjee R."/>
            <person name="Barker G.E."/>
            <person name="Barlow K.F."/>
            <person name="Barrett I.P."/>
            <person name="Bates K.N."/>
            <person name="Beare D.M."/>
            <person name="Beasley H."/>
            <person name="Beasley O."/>
            <person name="Beck A."/>
            <person name="Bethel G."/>
            <person name="Blechschmidt K."/>
            <person name="Brady N."/>
            <person name="Bray-Allen S."/>
            <person name="Bridgeman A.M."/>
            <person name="Brown A.J."/>
            <person name="Brown M.J."/>
            <person name="Bonnin D."/>
            <person name="Bruford E.A."/>
            <person name="Buhay C."/>
            <person name="Burch P."/>
            <person name="Burford D."/>
            <person name="Burgess J."/>
            <person name="Burrill W."/>
            <person name="Burton J."/>
            <person name="Bye J.M."/>
            <person name="Carder C."/>
            <person name="Carrel L."/>
            <person name="Chako J."/>
            <person name="Chapman J.C."/>
            <person name="Chavez D."/>
            <person name="Chen E."/>
            <person name="Chen G."/>
            <person name="Chen Y."/>
            <person name="Chen Z."/>
            <person name="Chinault C."/>
            <person name="Ciccodicola A."/>
            <person name="Clark S.Y."/>
            <person name="Clarke G."/>
            <person name="Clee C.M."/>
            <person name="Clegg S."/>
            <person name="Clerc-Blankenburg K."/>
            <person name="Clifford K."/>
            <person name="Cobley V."/>
            <person name="Cole C.G."/>
            <person name="Conquer J.S."/>
            <person name="Corby N."/>
            <person name="Connor R.E."/>
            <person name="David R."/>
            <person name="Davies J."/>
            <person name="Davis C."/>
            <person name="Davis J."/>
            <person name="Delgado O."/>
            <person name="Deshazo D."/>
            <person name="Dhami P."/>
            <person name="Ding Y."/>
            <person name="Dinh H."/>
            <person name="Dodsworth S."/>
            <person name="Draper H."/>
            <person name="Dugan-Rocha S."/>
            <person name="Dunham A."/>
            <person name="Dunn M."/>
            <person name="Durbin K.J."/>
            <person name="Dutta I."/>
            <person name="Eades T."/>
            <person name="Ellwood M."/>
            <person name="Emery-Cohen A."/>
            <person name="Errington H."/>
            <person name="Evans K.L."/>
            <person name="Faulkner L."/>
            <person name="Francis F."/>
            <person name="Frankland J."/>
            <person name="Fraser A.E."/>
            <person name="Galgoczy P."/>
            <person name="Gilbert J."/>
            <person name="Gill R."/>
            <person name="Gloeckner G."/>
            <person name="Gregory S.G."/>
            <person name="Gribble S."/>
            <person name="Griffiths C."/>
            <person name="Grocock R."/>
            <person name="Gu Y."/>
            <person name="Gwilliam R."/>
            <person name="Hamilton C."/>
            <person name="Hart E.A."/>
            <person name="Hawes A."/>
            <person name="Heath P.D."/>
            <person name="Heitmann K."/>
            <person name="Hennig S."/>
            <person name="Hernandez J."/>
            <person name="Hinzmann B."/>
            <person name="Ho S."/>
            <person name="Hoffs M."/>
            <person name="Howden P.J."/>
            <person name="Huckle E.J."/>
            <person name="Hume J."/>
            <person name="Hunt P.J."/>
            <person name="Hunt A.R."/>
            <person name="Isherwood J."/>
            <person name="Jacob L."/>
            <person name="Johnson D."/>
            <person name="Jones S."/>
            <person name="de Jong P.J."/>
            <person name="Joseph S.S."/>
            <person name="Keenan S."/>
            <person name="Kelly S."/>
            <person name="Kershaw J.K."/>
            <person name="Khan Z."/>
            <person name="Kioschis P."/>
            <person name="Klages S."/>
            <person name="Knights A.J."/>
            <person name="Kosiura A."/>
            <person name="Kovar-Smith C."/>
            <person name="Laird G.K."/>
            <person name="Langford C."/>
            <person name="Lawlor S."/>
            <person name="Leversha M."/>
            <person name="Lewis L."/>
            <person name="Liu W."/>
            <person name="Lloyd C."/>
            <person name="Lloyd D.M."/>
            <person name="Loulseged H."/>
            <person name="Loveland J.E."/>
            <person name="Lovell J.D."/>
            <person name="Lozado R."/>
            <person name="Lu J."/>
            <person name="Lyne R."/>
            <person name="Ma J."/>
            <person name="Maheshwari M."/>
            <person name="Matthews L.H."/>
            <person name="McDowall J."/>
            <person name="McLaren S."/>
            <person name="McMurray A."/>
            <person name="Meidl P."/>
            <person name="Meitinger T."/>
            <person name="Milne S."/>
            <person name="Miner G."/>
            <person name="Mistry S.L."/>
            <person name="Morgan M."/>
            <person name="Morris S."/>
            <person name="Mueller I."/>
            <person name="Mullikin J.C."/>
            <person name="Nguyen N."/>
            <person name="Nordsiek G."/>
            <person name="Nyakatura G."/>
            <person name="O'dell C.N."/>
            <person name="Okwuonu G."/>
            <person name="Palmer S."/>
            <person name="Pandian R."/>
            <person name="Parker D."/>
            <person name="Parrish J."/>
            <person name="Pasternak S."/>
            <person name="Patel D."/>
            <person name="Pearce A.V."/>
            <person name="Pearson D.M."/>
            <person name="Pelan S.E."/>
            <person name="Perez L."/>
            <person name="Porter K.M."/>
            <person name="Ramsey Y."/>
            <person name="Reichwald K."/>
            <person name="Rhodes S."/>
            <person name="Ridler K.A."/>
            <person name="Schlessinger D."/>
            <person name="Schueler M.G."/>
            <person name="Sehra H.K."/>
            <person name="Shaw-Smith C."/>
            <person name="Shen H."/>
            <person name="Sheridan E.M."/>
            <person name="Shownkeen R."/>
            <person name="Skuce C.D."/>
            <person name="Smith M.L."/>
            <person name="Sotheran E.C."/>
            <person name="Steingruber H.E."/>
            <person name="Steward C.A."/>
            <person name="Storey R."/>
            <person name="Swann R.M."/>
            <person name="Swarbreck D."/>
            <person name="Tabor P.E."/>
            <person name="Taudien S."/>
            <person name="Taylor T."/>
            <person name="Teague B."/>
            <person name="Thomas K."/>
            <person name="Thorpe A."/>
            <person name="Timms K."/>
            <person name="Tracey A."/>
            <person name="Trevanion S."/>
            <person name="Tromans A.C."/>
            <person name="d'Urso M."/>
            <person name="Verduzco D."/>
            <person name="Villasana D."/>
            <person name="Waldron L."/>
            <person name="Wall M."/>
            <person name="Wang Q."/>
            <person name="Warren J."/>
            <person name="Warry G.L."/>
            <person name="Wei X."/>
            <person name="West A."/>
            <person name="Whitehead S.L."/>
            <person name="Whiteley M.N."/>
            <person name="Wilkinson J.E."/>
            <person name="Willey D.L."/>
            <person name="Williams G."/>
            <person name="Williams L."/>
            <person name="Williamson A."/>
            <person name="Williamson H."/>
            <person name="Wilming L."/>
            <person name="Woodmansey R.L."/>
            <person name="Wray P.W."/>
            <person name="Yen J."/>
            <person name="Zhang J."/>
            <person name="Zhou J."/>
            <person name="Zoghbi H."/>
            <person name="Zorilla S."/>
            <person name="Buck D."/>
            <person name="Reinhardt R."/>
            <person name="Poustka A."/>
            <person name="Rosenthal A."/>
            <person name="Lehrach H."/>
            <person name="Meindl A."/>
            <person name="Minx P.J."/>
            <person name="Hillier L.W."/>
            <person name="Willard H.F."/>
            <person name="Wilson R.K."/>
            <person name="Waterston R.H."/>
            <person name="Rice C.M."/>
            <person name="Vaudin M."/>
            <person name="Coulson A."/>
            <person name="Nelson D.L."/>
            <person name="Weinstock G."/>
            <person name="Sulston J.E."/>
            <person name="Durbin R.M."/>
            <person name="Hubbard T."/>
            <person name="Gibbs R.A."/>
            <person name="Beck S."/>
            <person name="Rogers J."/>
            <person name="Bentley D.R."/>
        </authorList>
    </citation>
    <scope>NUCLEOTIDE SEQUENCE [LARGE SCALE GENOMIC DNA]</scope>
</reference>
<reference key="4">
    <citation type="submission" date="2005-07" db="EMBL/GenBank/DDBJ databases">
        <authorList>
            <person name="Mural R.J."/>
            <person name="Istrail S."/>
            <person name="Sutton G.G."/>
            <person name="Florea L."/>
            <person name="Halpern A.L."/>
            <person name="Mobarry C.M."/>
            <person name="Lippert R."/>
            <person name="Walenz B."/>
            <person name="Shatkay H."/>
            <person name="Dew I."/>
            <person name="Miller J.R."/>
            <person name="Flanigan M.J."/>
            <person name="Edwards N.J."/>
            <person name="Bolanos R."/>
            <person name="Fasulo D."/>
            <person name="Halldorsson B.V."/>
            <person name="Hannenhalli S."/>
            <person name="Turner R."/>
            <person name="Yooseph S."/>
            <person name="Lu F."/>
            <person name="Nusskern D.R."/>
            <person name="Shue B.C."/>
            <person name="Zheng X.H."/>
            <person name="Zhong F."/>
            <person name="Delcher A.L."/>
            <person name="Huson D.H."/>
            <person name="Kravitz S.A."/>
            <person name="Mouchard L."/>
            <person name="Reinert K."/>
            <person name="Remington K.A."/>
            <person name="Clark A.G."/>
            <person name="Waterman M.S."/>
            <person name="Eichler E.E."/>
            <person name="Adams M.D."/>
            <person name="Hunkapiller M.W."/>
            <person name="Myers E.W."/>
            <person name="Venter J.C."/>
        </authorList>
    </citation>
    <scope>NUCLEOTIDE SEQUENCE [LARGE SCALE GENOMIC DNA]</scope>
</reference>
<reference key="5">
    <citation type="journal article" date="2004" name="Genome Res.">
        <title>The status, quality, and expansion of the NIH full-length cDNA project: the Mammalian Gene Collection (MGC).</title>
        <authorList>
            <consortium name="The MGC Project Team"/>
        </authorList>
    </citation>
    <scope>NUCLEOTIDE SEQUENCE [LARGE SCALE MRNA] (ISOFORM 1)</scope>
    <source>
        <tissue>Choriocarcinoma</tissue>
    </source>
</reference>
<reference key="6">
    <citation type="journal article" date="2007" name="Science">
        <title>ATM and ATR substrate analysis reveals extensive protein networks responsive to DNA damage.</title>
        <authorList>
            <person name="Matsuoka S."/>
            <person name="Ballif B.A."/>
            <person name="Smogorzewska A."/>
            <person name="McDonald E.R. III"/>
            <person name="Hurov K.E."/>
            <person name="Luo J."/>
            <person name="Bakalarski C.E."/>
            <person name="Zhao Z."/>
            <person name="Solimini N."/>
            <person name="Lerenthal Y."/>
            <person name="Shiloh Y."/>
            <person name="Gygi S.P."/>
            <person name="Elledge S.J."/>
        </authorList>
    </citation>
    <scope>IDENTIFICATION BY MASS SPECTROMETRY [LARGE SCALE ANALYSIS]</scope>
    <source>
        <tissue>Embryonic kidney</tissue>
    </source>
</reference>
<reference key="7">
    <citation type="journal article" date="2008" name="Proc. Natl. Acad. Sci. U.S.A.">
        <title>A quantitative atlas of mitotic phosphorylation.</title>
        <authorList>
            <person name="Dephoure N."/>
            <person name="Zhou C."/>
            <person name="Villen J."/>
            <person name="Beausoleil S.A."/>
            <person name="Bakalarski C.E."/>
            <person name="Elledge S.J."/>
            <person name="Gygi S.P."/>
        </authorList>
    </citation>
    <scope>PHOSPHORYLATION [LARGE SCALE ANALYSIS] AT SER-358</scope>
    <scope>IDENTIFICATION BY MASS SPECTROMETRY [LARGE SCALE ANALYSIS]</scope>
    <source>
        <tissue>Cervix carcinoma</tissue>
    </source>
</reference>
<reference key="8">
    <citation type="journal article" date="2009" name="Sci. Signal.">
        <title>Quantitative phosphoproteomic analysis of T cell receptor signaling reveals system-wide modulation of protein-protein interactions.</title>
        <authorList>
            <person name="Mayya V."/>
            <person name="Lundgren D.H."/>
            <person name="Hwang S.-I."/>
            <person name="Rezaul K."/>
            <person name="Wu L."/>
            <person name="Eng J.K."/>
            <person name="Rodionov V."/>
            <person name="Han D.K."/>
        </authorList>
    </citation>
    <scope>PHOSPHORYLATION [LARGE SCALE ANALYSIS] AT SER-360</scope>
    <scope>IDENTIFICATION BY MASS SPECTROMETRY [LARGE SCALE ANALYSIS]</scope>
    <source>
        <tissue>Leukemic T-cell</tissue>
    </source>
</reference>
<reference key="9">
    <citation type="journal article" date="2010" name="Sci. Signal.">
        <title>Quantitative phosphoproteomics reveals widespread full phosphorylation site occupancy during mitosis.</title>
        <authorList>
            <person name="Olsen J.V."/>
            <person name="Vermeulen M."/>
            <person name="Santamaria A."/>
            <person name="Kumar C."/>
            <person name="Miller M.L."/>
            <person name="Jensen L.J."/>
            <person name="Gnad F."/>
            <person name="Cox J."/>
            <person name="Jensen T.S."/>
            <person name="Nigg E.A."/>
            <person name="Brunak S."/>
            <person name="Mann M."/>
        </authorList>
    </citation>
    <scope>IDENTIFICATION BY MASS SPECTROMETRY [LARGE SCALE ANALYSIS]</scope>
    <source>
        <tissue>Cervix carcinoma</tissue>
    </source>
</reference>
<reference key="10">
    <citation type="journal article" date="2013" name="J. Proteome Res.">
        <title>Toward a comprehensive characterization of a human cancer cell phosphoproteome.</title>
        <authorList>
            <person name="Zhou H."/>
            <person name="Di Palma S."/>
            <person name="Preisinger C."/>
            <person name="Peng M."/>
            <person name="Polat A.N."/>
            <person name="Heck A.J."/>
            <person name="Mohammed S."/>
        </authorList>
    </citation>
    <scope>PHOSPHORYLATION [LARGE SCALE ANALYSIS] AT SER-360</scope>
    <scope>IDENTIFICATION BY MASS SPECTROMETRY [LARGE SCALE ANALYSIS]</scope>
    <source>
        <tissue>Cervix carcinoma</tissue>
        <tissue>Erythroleukemia</tissue>
    </source>
</reference>
<reference key="11">
    <citation type="journal article" date="2014" name="J. Biol. Chem.">
        <title>Arf6 guanine nucleotide exchange factor cytohesin-2 binds to CCDC120 and is transported along neurites to mediate neurite growth.</title>
        <authorList>
            <person name="Torii T."/>
            <person name="Miyamoto Y."/>
            <person name="Tago K."/>
            <person name="Sango K."/>
            <person name="Nakamura K."/>
            <person name="Sanbe A."/>
            <person name="Tanoue A."/>
            <person name="Yamauchi J."/>
        </authorList>
    </citation>
    <scope>FUNCTION</scope>
    <scope>INTERACTION WITH CYTH2</scope>
    <scope>SUBCELLULAR LOCATION</scope>
    <scope>UBIQUITINATION</scope>
</reference>
<reference key="12">
    <citation type="journal article" date="2017" name="Nat. Commun.">
        <title>Hierarchical assembly of centriole subdistal appendages via centrosome binding proteins CCDC120 and CCDC68.</title>
        <authorList>
            <person name="Huang N."/>
            <person name="Xia Y."/>
            <person name="Zhang D."/>
            <person name="Wang S."/>
            <person name="Bao Y."/>
            <person name="He R."/>
            <person name="Teng J."/>
            <person name="Chen J."/>
        </authorList>
    </citation>
    <scope>FUNCTION</scope>
    <scope>SUBCELLULAR LOCATION</scope>
    <scope>INTERACTION WITH NIN AND CEP170</scope>
</reference>
<comment type="function">
    <text evidence="4">Centriolar protein required for centriole subdistal appendage assembly and microtubule anchoring in interphase cells (PubMed:28422092). Together with CCDC68, cooperate with subdistal appendage components ODF2, NIN and CEP170 for hierarchical subdistal appendage assembly (PubMed:28422092). Recruits NIN and CEP170 to centrosomes (PubMed:28422092). Also required for neurite growth. Localizes CYTH2 to vesicles to allow its transport along neurites, and subsequent ARF6 activation and neurite growth.</text>
</comment>
<comment type="subunit">
    <text evidence="4 5">Interacts with NIN and CEP170; leading to recruit them to centrosomes (PubMed:28422092). Directly interacts with CYTH2; this interaction stabilizes CCDC120, possibly by preventing ubiquitination.</text>
</comment>
<comment type="interaction">
    <interactant intactId="EBI-744556">
        <id>Q96HB5</id>
    </interactant>
    <interactant intactId="EBI-8643161">
        <id>Q9NX04</id>
        <label>AIRIM</label>
    </interactant>
    <organismsDiffer>false</organismsDiffer>
    <experiments>3</experiments>
</comment>
<comment type="interaction">
    <interactant intactId="EBI-744556">
        <id>Q96HB5</id>
    </interactant>
    <interactant intactId="EBI-357530">
        <id>Q9ULX6</id>
        <label>AKAP8L</label>
    </interactant>
    <organismsDiffer>false</organismsDiffer>
    <experiments>3</experiments>
</comment>
<comment type="interaction">
    <interactant intactId="EBI-744556">
        <id>Q96HB5</id>
    </interactant>
    <interactant intactId="EBI-948603">
        <id>Q03989</id>
        <label>ARID5A</label>
    </interactant>
    <organismsDiffer>false</organismsDiffer>
    <experiments>3</experiments>
</comment>
<comment type="interaction">
    <interactant intactId="EBI-744556">
        <id>Q96HB5</id>
    </interactant>
    <interactant intactId="EBI-12811889">
        <id>Q9Y6H3</id>
        <label>ATP23</label>
    </interactant>
    <organismsDiffer>false</organismsDiffer>
    <experiments>3</experiments>
</comment>
<comment type="interaction">
    <interactant intactId="EBI-744556">
        <id>Q96HB5</id>
    </interactant>
    <interactant intactId="EBI-1050106">
        <id>O75934</id>
        <label>BCAS2</label>
    </interactant>
    <organismsDiffer>false</organismsDiffer>
    <experiments>3</experiments>
</comment>
<comment type="interaction">
    <interactant intactId="EBI-744556">
        <id>Q96HB5</id>
    </interactant>
    <interactant intactId="EBI-2548012">
        <id>Q9H2G9</id>
        <label>BLZF1</label>
    </interactant>
    <organismsDiffer>false</organismsDiffer>
    <experiments>5</experiments>
</comment>
<comment type="interaction">
    <interactant intactId="EBI-744556">
        <id>Q96HB5</id>
    </interactant>
    <interactant intactId="EBI-10179719">
        <id>A2RRN7</id>
        <label>CADPS</label>
    </interactant>
    <organismsDiffer>false</organismsDiffer>
    <experiments>3</experiments>
</comment>
<comment type="interaction">
    <interactant intactId="EBI-744556">
        <id>Q96HB5</id>
    </interactant>
    <interactant intactId="EBI-739580">
        <id>Q13137</id>
        <label>CALCOCO2</label>
    </interactant>
    <organismsDiffer>false</organismsDiffer>
    <experiments>3</experiments>
</comment>
<comment type="interaction">
    <interactant intactId="EBI-744556">
        <id>Q96HB5</id>
    </interactant>
    <interactant intactId="EBI-11530605">
        <id>Q9H257-2</id>
        <label>CARD9</label>
    </interactant>
    <organismsDiffer>false</organismsDiffer>
    <experiments>3</experiments>
</comment>
<comment type="interaction">
    <interactant intactId="EBI-744556">
        <id>Q96HB5</id>
    </interactant>
    <interactant intactId="EBI-10171570">
        <id>Q68D86</id>
        <label>CCDC102B</label>
    </interactant>
    <organismsDiffer>false</organismsDiffer>
    <experiments>3</experiments>
</comment>
<comment type="interaction">
    <interactant intactId="EBI-744556">
        <id>Q96HB5</id>
    </interactant>
    <interactant intactId="EBI-10961312">
        <id>Q8IYE1</id>
        <label>CCDC13</label>
    </interactant>
    <organismsDiffer>false</organismsDiffer>
    <experiments>3</experiments>
</comment>
<comment type="interaction">
    <interactant intactId="EBI-744556">
        <id>Q96HB5</id>
    </interactant>
    <interactant intactId="EBI-10961624">
        <id>Q2TAC2-2</id>
        <label>CCDC57</label>
    </interactant>
    <organismsDiffer>false</organismsDiffer>
    <experiments>3</experiments>
</comment>
<comment type="interaction">
    <interactant intactId="EBI-744556">
        <id>Q96HB5</id>
    </interactant>
    <interactant intactId="EBI-1181367">
        <id>Q01850</id>
        <label>CDR2</label>
    </interactant>
    <organismsDiffer>false</organismsDiffer>
    <experiments>3</experiments>
</comment>
<comment type="interaction">
    <interactant intactId="EBI-744556">
        <id>Q96HB5</id>
    </interactant>
    <interactant intactId="EBI-1104799">
        <id>Q5SW79</id>
        <label>CEP170</label>
    </interactant>
    <organismsDiffer>false</organismsDiffer>
    <experiments>14</experiments>
</comment>
<comment type="interaction">
    <interactant intactId="EBI-744556">
        <id>Q96HB5</id>
    </interactant>
    <interactant intactId="EBI-747776">
        <id>Q53EZ4</id>
        <label>CEP55</label>
    </interactant>
    <organismsDiffer>false</organismsDiffer>
    <experiments>3</experiments>
</comment>
<comment type="interaction">
    <interactant intactId="EBI-744556">
        <id>Q96HB5</id>
    </interactant>
    <interactant intactId="EBI-456371">
        <id>P61024</id>
        <label>CKS1B</label>
    </interactant>
    <organismsDiffer>false</organismsDiffer>
    <experiments>3</experiments>
</comment>
<comment type="interaction">
    <interactant intactId="EBI-744556">
        <id>Q96HB5</id>
    </interactant>
    <interactant intactId="EBI-12819063">
        <id>Q9BYD5</id>
        <label>CNFN</label>
    </interactant>
    <organismsDiffer>false</organismsDiffer>
    <experiments>3</experiments>
</comment>
<comment type="interaction">
    <interactant intactId="EBI-744556">
        <id>Q96HB5</id>
    </interactant>
    <interactant intactId="EBI-3866319">
        <id>Q9Y2V7</id>
        <label>COG6</label>
    </interactant>
    <organismsDiffer>false</organismsDiffer>
    <experiments>3</experiments>
</comment>
<comment type="interaction">
    <interactant intactId="EBI-744556">
        <id>Q96HB5</id>
    </interactant>
    <interactant intactId="EBI-10171902">
        <id>P56545-3</id>
        <label>CTBP2</label>
    </interactant>
    <organismsDiffer>false</organismsDiffer>
    <experiments>3</experiments>
</comment>
<comment type="interaction">
    <interactant intactId="EBI-744556">
        <id>Q96HB5</id>
    </interactant>
    <interactant intactId="EBI-3867333">
        <id>A8MQ03</id>
        <label>CYSRT1</label>
    </interactant>
    <organismsDiffer>false</organismsDiffer>
    <experiments>3</experiments>
</comment>
<comment type="interaction">
    <interactant intactId="EBI-744556">
        <id>Q96HB5</id>
    </interactant>
    <interactant intactId="EBI-997830">
        <id>Q15438</id>
        <label>CYTH1</label>
    </interactant>
    <organismsDiffer>false</organismsDiffer>
    <experiments>12</experiments>
</comment>
<comment type="interaction">
    <interactant intactId="EBI-744556">
        <id>Q96HB5</id>
    </interactant>
    <interactant intactId="EBI-448974">
        <id>Q99418</id>
        <label>CYTH2</label>
    </interactant>
    <organismsDiffer>false</organismsDiffer>
    <experiments>7</experiments>
</comment>
<comment type="interaction">
    <interactant intactId="EBI-744556">
        <id>Q96HB5</id>
    </interactant>
    <interactant intactId="EBI-11974015">
        <id>O43739-2</id>
        <label>CYTH3</label>
    </interactant>
    <organismsDiffer>false</organismsDiffer>
    <experiments>4</experiments>
</comment>
<comment type="interaction">
    <interactant intactId="EBI-744556">
        <id>Q96HB5</id>
    </interactant>
    <interactant intactId="EBI-11521003">
        <id>Q9UIA0</id>
        <label>CYTH4</label>
    </interactant>
    <organismsDiffer>false</organismsDiffer>
    <experiments>10</experiments>
</comment>
<comment type="interaction">
    <interactant intactId="EBI-744556">
        <id>Q96HB5</id>
    </interactant>
    <interactant intactId="EBI-2349927">
        <id>Q5JST6</id>
        <label>EFHC2</label>
    </interactant>
    <organismsDiffer>false</organismsDiffer>
    <experiments>3</experiments>
</comment>
<comment type="interaction">
    <interactant intactId="EBI-744556">
        <id>Q96HB5</id>
    </interactant>
    <interactant intactId="EBI-711990">
        <id>O00303</id>
        <label>EIF3F</label>
    </interactant>
    <organismsDiffer>false</organismsDiffer>
    <experiments>3</experiments>
</comment>
<comment type="interaction">
    <interactant intactId="EBI-744556">
        <id>Q96HB5</id>
    </interactant>
    <interactant intactId="EBI-11958845">
        <id>O94868-3</id>
        <label>FCHSD2</label>
    </interactant>
    <organismsDiffer>false</organismsDiffer>
    <experiments>3</experiments>
</comment>
<comment type="interaction">
    <interactant intactId="EBI-744556">
        <id>Q96HB5</id>
    </interactant>
    <interactant intactId="EBI-348399">
        <id>P22607</id>
        <label>FGFR3</label>
    </interactant>
    <organismsDiffer>false</organismsDiffer>
    <experiments>3</experiments>
</comment>
<comment type="interaction">
    <interactant intactId="EBI-744556">
        <id>Q96HB5</id>
    </interactant>
    <interactant intactId="EBI-852851">
        <id>P01100</id>
        <label>FOS</label>
    </interactant>
    <organismsDiffer>false</organismsDiffer>
    <experiments>3</experiments>
</comment>
<comment type="interaction">
    <interactant intactId="EBI-744556">
        <id>Q96HB5</id>
    </interactant>
    <interactant intactId="EBI-744510">
        <id>P15407</id>
        <label>FOSL1</label>
    </interactant>
    <organismsDiffer>false</organismsDiffer>
    <experiments>3</experiments>
</comment>
<comment type="interaction">
    <interactant intactId="EBI-744556">
        <id>Q96HB5</id>
    </interactant>
    <interactant intactId="EBI-5661036">
        <id>A1L4K1</id>
        <label>FSD2</label>
    </interactant>
    <organismsDiffer>false</organismsDiffer>
    <experiments>3</experiments>
</comment>
<comment type="interaction">
    <interactant intactId="EBI-744556">
        <id>Q96HB5</id>
    </interactant>
    <interactant intactId="EBI-7960826">
        <id>Q8NHY3</id>
        <label>GAS2L2</label>
    </interactant>
    <organismsDiffer>false</organismsDiffer>
    <experiments>3</experiments>
</comment>
<comment type="interaction">
    <interactant intactId="EBI-744556">
        <id>Q96HB5</id>
    </interactant>
    <interactant intactId="EBI-744302">
        <id>P14136</id>
        <label>GFAP</label>
    </interactant>
    <organismsDiffer>false</organismsDiffer>
    <experiments>3</experiments>
</comment>
<comment type="interaction">
    <interactant intactId="EBI-744556">
        <id>Q96HB5</id>
    </interactant>
    <interactant intactId="EBI-618309">
        <id>Q08379</id>
        <label>GOLGA2</label>
    </interactant>
    <organismsDiffer>false</organismsDiffer>
    <experiments>3</experiments>
</comment>
<comment type="interaction">
    <interactant intactId="EBI-744556">
        <id>Q96HB5</id>
    </interactant>
    <interactant intactId="EBI-5916454">
        <id>A6NEM1</id>
        <label>GOLGA6L9</label>
    </interactant>
    <organismsDiffer>false</organismsDiffer>
    <experiments>3</experiments>
</comment>
<comment type="interaction">
    <interactant intactId="EBI-744556">
        <id>Q96HB5</id>
    </interactant>
    <interactant intactId="EBI-11519926">
        <id>Q6PI77</id>
        <label>GPRASP3</label>
    </interactant>
    <organismsDiffer>false</organismsDiffer>
    <experiments>3</experiments>
</comment>
<comment type="interaction">
    <interactant intactId="EBI-744556">
        <id>Q96HB5</id>
    </interactant>
    <interactant intactId="EBI-351590">
        <id>P31943</id>
        <label>HNRNPH1</label>
    </interactant>
    <organismsDiffer>false</organismsDiffer>
    <experiments>3</experiments>
</comment>
<comment type="interaction">
    <interactant intactId="EBI-744556">
        <id>Q96HB5</id>
    </interactant>
    <interactant intactId="EBI-748420">
        <id>Q9NSC5</id>
        <label>HOMER3</label>
    </interactant>
    <organismsDiffer>false</organismsDiffer>
    <experiments>3</experiments>
</comment>
<comment type="interaction">
    <interactant intactId="EBI-744556">
        <id>Q96HB5</id>
    </interactant>
    <interactant intactId="EBI-740785">
        <id>P49639</id>
        <label>HOXA1</label>
    </interactant>
    <organismsDiffer>false</organismsDiffer>
    <experiments>5</experiments>
</comment>
<comment type="interaction">
    <interactant intactId="EBI-744556">
        <id>Q96HB5</id>
    </interactant>
    <interactant intactId="EBI-350145">
        <id>P01112</id>
        <label>HRAS</label>
    </interactant>
    <organismsDiffer>false</organismsDiffer>
    <experiments>3</experiments>
</comment>
<comment type="interaction">
    <interactant intactId="EBI-744556">
        <id>Q96HB5</id>
    </interactant>
    <interactant intactId="EBI-7116203">
        <id>O75031</id>
        <label>HSF2BP</label>
    </interactant>
    <organismsDiffer>false</organismsDiffer>
    <experiments>3</experiments>
</comment>
<comment type="interaction">
    <interactant intactId="EBI-744556">
        <id>Q96HB5</id>
    </interactant>
    <interactant intactId="EBI-466029">
        <id>P42858</id>
        <label>HTT</label>
    </interactant>
    <organismsDiffer>false</organismsDiffer>
    <experiments>3</experiments>
</comment>
<comment type="interaction">
    <interactant intactId="EBI-744556">
        <id>Q96HB5</id>
    </interactant>
    <interactant intactId="EBI-347427">
        <id>Q13099</id>
        <label>IFT88</label>
    </interactant>
    <organismsDiffer>false</organismsDiffer>
    <experiments>3</experiments>
</comment>
<comment type="interaction">
    <interactant intactId="EBI-744556">
        <id>Q96HB5</id>
    </interactant>
    <interactant intactId="EBI-8638439">
        <id>Q8IYA8</id>
        <label>IHO1</label>
    </interactant>
    <organismsDiffer>false</organismsDiffer>
    <experiments>3</experiments>
</comment>
<comment type="interaction">
    <interactant intactId="EBI-744556">
        <id>Q96HB5</id>
    </interactant>
    <interactant intactId="EBI-748258">
        <id>Q5TA45</id>
        <label>INTS11</label>
    </interactant>
    <organismsDiffer>false</organismsDiffer>
    <experiments>3</experiments>
</comment>
<comment type="interaction">
    <interactant intactId="EBI-744556">
        <id>Q96HB5</id>
    </interactant>
    <interactant intactId="EBI-749265">
        <id>Q8N6L0</id>
        <label>KASH5</label>
    </interactant>
    <organismsDiffer>false</organismsDiffer>
    <experiments>3</experiments>
</comment>
<comment type="interaction">
    <interactant intactId="EBI-744556">
        <id>Q96HB5</id>
    </interactant>
    <interactant intactId="EBI-948001">
        <id>Q15323</id>
        <label>KRT31</label>
    </interactant>
    <organismsDiffer>false</organismsDiffer>
    <experiments>3</experiments>
</comment>
<comment type="interaction">
    <interactant intactId="EBI-744556">
        <id>Q96HB5</id>
    </interactant>
    <interactant intactId="EBI-1047093">
        <id>O76011</id>
        <label>KRT34</label>
    </interactant>
    <organismsDiffer>false</organismsDiffer>
    <experiments>3</experiments>
</comment>
<comment type="interaction">
    <interactant intactId="EBI-744556">
        <id>Q96HB5</id>
    </interactant>
    <interactant intactId="EBI-1058674">
        <id>Q92764</id>
        <label>KRT35</label>
    </interactant>
    <organismsDiffer>false</organismsDiffer>
    <experiments>3</experiments>
</comment>
<comment type="interaction">
    <interactant intactId="EBI-744556">
        <id>Q96HB5</id>
    </interactant>
    <interactant intactId="EBI-1047263">
        <id>O76015</id>
        <label>KRT38</label>
    </interactant>
    <organismsDiffer>false</organismsDiffer>
    <experiments>3</experiments>
</comment>
<comment type="interaction">
    <interactant intactId="EBI-744556">
        <id>Q96HB5</id>
    </interactant>
    <interactant intactId="EBI-10241252">
        <id>Q3SY46</id>
        <label>KRTAP13-3</label>
    </interactant>
    <organismsDiffer>false</organismsDiffer>
    <experiments>3</experiments>
</comment>
<comment type="interaction">
    <interactant intactId="EBI-744556">
        <id>Q96HB5</id>
    </interactant>
    <interactant intactId="EBI-12811111">
        <id>Q8IUB9</id>
        <label>KRTAP19-1</label>
    </interactant>
    <organismsDiffer>false</organismsDiffer>
    <experiments>3</experiments>
</comment>
<comment type="interaction">
    <interactant intactId="EBI-744556">
        <id>Q96HB5</id>
    </interactant>
    <interactant intactId="EBI-12111050">
        <id>Q3LI64</id>
        <label>KRTAP6-1</label>
    </interactant>
    <organismsDiffer>false</organismsDiffer>
    <experiments>3</experiments>
</comment>
<comment type="interaction">
    <interactant intactId="EBI-744556">
        <id>Q96HB5</id>
    </interactant>
    <interactant intactId="EBI-11962084">
        <id>Q3LI66</id>
        <label>KRTAP6-2</label>
    </interactant>
    <organismsDiffer>false</organismsDiffer>
    <experiments>3</experiments>
</comment>
<comment type="interaction">
    <interactant intactId="EBI-744556">
        <id>Q96HB5</id>
    </interactant>
    <interactant intactId="EBI-22311199">
        <id>Q3LI67</id>
        <label>KRTAP6-3</label>
    </interactant>
    <organismsDiffer>false</organismsDiffer>
    <experiments>3</experiments>
</comment>
<comment type="interaction">
    <interactant intactId="EBI-744556">
        <id>Q96HB5</id>
    </interactant>
    <interactant intactId="EBI-2830427">
        <id>Q03252</id>
        <label>LMNB2</label>
    </interactant>
    <organismsDiffer>false</organismsDiffer>
    <experiments>3</experiments>
</comment>
<comment type="interaction">
    <interactant intactId="EBI-744556">
        <id>Q96HB5</id>
    </interactant>
    <interactant intactId="EBI-2798728">
        <id>P61968</id>
        <label>LMO4</label>
    </interactant>
    <organismsDiffer>false</organismsDiffer>
    <experiments>3</experiments>
</comment>
<comment type="interaction">
    <interactant intactId="EBI-744556">
        <id>Q96HB5</id>
    </interactant>
    <interactant intactId="EBI-1216080">
        <id>Q9Y250</id>
        <label>LZTS1</label>
    </interactant>
    <organismsDiffer>false</organismsDiffer>
    <experiments>3</experiments>
</comment>
<comment type="interaction">
    <interactant intactId="EBI-744556">
        <id>Q96HB5</id>
    </interactant>
    <interactant intactId="EBI-716006">
        <id>Q9Y5V3</id>
        <label>MAGED1</label>
    </interactant>
    <organismsDiffer>false</organismsDiffer>
    <experiments>3</experiments>
</comment>
<comment type="interaction">
    <interactant intactId="EBI-744556">
        <id>Q96HB5</id>
    </interactant>
    <interactant intactId="EBI-394704">
        <id>Q9P086</id>
        <label>MED11</label>
    </interactant>
    <organismsDiffer>false</organismsDiffer>
    <experiments>3</experiments>
</comment>
<comment type="interaction">
    <interactant intactId="EBI-744556">
        <id>Q96HB5</id>
    </interactant>
    <interactant intactId="EBI-8487781">
        <id>Q8N6F8</id>
        <label>METTL27</label>
    </interactant>
    <organismsDiffer>false</organismsDiffer>
    <experiments>3</experiments>
</comment>
<comment type="interaction">
    <interactant intactId="EBI-744556">
        <id>Q96HB5</id>
    </interactant>
    <interactant intactId="EBI-10172526">
        <id>Q9UJV3-2</id>
        <label>MID2</label>
    </interactant>
    <organismsDiffer>false</organismsDiffer>
    <experiments>3</experiments>
</comment>
<comment type="interaction">
    <interactant intactId="EBI-744556">
        <id>Q96HB5</id>
    </interactant>
    <interactant intactId="EBI-2801965">
        <id>Q5JXC2</id>
        <label>MIIP</label>
    </interactant>
    <organismsDiffer>false</organismsDiffer>
    <experiments>3</experiments>
</comment>
<comment type="interaction">
    <interactant intactId="EBI-744556">
        <id>Q96HB5</id>
    </interactant>
    <interactant intactId="EBI-2548751">
        <id>Q8TD10</id>
        <label>MIPOL1</label>
    </interactant>
    <organismsDiffer>false</organismsDiffer>
    <experiments>6</experiments>
</comment>
<comment type="interaction">
    <interactant intactId="EBI-744556">
        <id>Q96HB5</id>
    </interactant>
    <interactant intactId="EBI-2340269">
        <id>Q13064</id>
        <label>MKRN3</label>
    </interactant>
    <organismsDiffer>false</organismsDiffer>
    <experiments>3</experiments>
</comment>
<comment type="interaction">
    <interactant intactId="EBI-744556">
        <id>Q96HB5</id>
    </interactant>
    <interactant intactId="EBI-720441">
        <id>Q96DV4</id>
        <label>MRPL38</label>
    </interactant>
    <organismsDiffer>false</organismsDiffer>
    <experiments>3</experiments>
</comment>
<comment type="interaction">
    <interactant intactId="EBI-744556">
        <id>Q96HB5</id>
    </interactant>
    <interactant intactId="EBI-11522433">
        <id>Q5JR59-3</id>
        <label>MTUS2</label>
    </interactant>
    <organismsDiffer>false</organismsDiffer>
    <experiments>3</experiments>
</comment>
<comment type="interaction">
    <interactant intactId="EBI-744556">
        <id>Q96HB5</id>
    </interactant>
    <interactant intactId="EBI-3906629">
        <id>P15173</id>
        <label>MYOG</label>
    </interactant>
    <organismsDiffer>false</organismsDiffer>
    <experiments>3</experiments>
</comment>
<comment type="interaction">
    <interactant intactId="EBI-744556">
        <id>Q96HB5</id>
    </interactant>
    <interactant intactId="EBI-713635">
        <id>O43639</id>
        <label>NCK2</label>
    </interactant>
    <organismsDiffer>false</organismsDiffer>
    <experiments>3</experiments>
</comment>
<comment type="interaction">
    <interactant intactId="EBI-744556">
        <id>Q96HB5</id>
    </interactant>
    <interactant intactId="EBI-11750983">
        <id>Q9HC98-4</id>
        <label>NEK6</label>
    </interactant>
    <organismsDiffer>false</organismsDiffer>
    <experiments>3</experiments>
</comment>
<comment type="interaction">
    <interactant intactId="EBI-744556">
        <id>Q96HB5</id>
    </interactant>
    <interactant intactId="EBI-1164022">
        <id>Q8N4C6</id>
        <label>NIN</label>
    </interactant>
    <organismsDiffer>false</organismsDiffer>
    <experiments>11</experiments>
</comment>
<comment type="interaction">
    <interactant intactId="EBI-744556">
        <id>Q96HB5</id>
    </interactant>
    <interactant intactId="EBI-17490746">
        <id>A8MTQ0</id>
        <label>NOTO</label>
    </interactant>
    <organismsDiffer>false</organismsDiffer>
    <experiments>3</experiments>
</comment>
<comment type="interaction">
    <interactant intactId="EBI-744556">
        <id>Q96HB5</id>
    </interactant>
    <interactant intactId="EBI-398874">
        <id>Q9UBU9</id>
        <label>NXF1</label>
    </interactant>
    <organismsDiffer>false</organismsDiffer>
    <experiments>3</experiments>
</comment>
<comment type="interaction">
    <interactant intactId="EBI-744556">
        <id>Q96HB5</id>
    </interactant>
    <interactant intactId="EBI-8744243">
        <id>Q5BJF6</id>
        <label>ODF2</label>
    </interactant>
    <organismsDiffer>false</organismsDiffer>
    <experiments>5</experiments>
</comment>
<comment type="interaction">
    <interactant intactId="EBI-744556">
        <id>Q96HB5</id>
    </interactant>
    <interactant intactId="EBI-11022007">
        <id>Q9HBE1-4</id>
        <label>PATZ1</label>
    </interactant>
    <organismsDiffer>false</organismsDiffer>
    <experiments>3</experiments>
</comment>
<comment type="interaction">
    <interactant intactId="EBI-744556">
        <id>Q96HB5</id>
    </interactant>
    <interactant intactId="EBI-716404">
        <id>P16284</id>
        <label>PECAM1</label>
    </interactant>
    <organismsDiffer>false</organismsDiffer>
    <experiments>3</experiments>
</comment>
<comment type="interaction">
    <interactant intactId="EBI-744556">
        <id>Q96HB5</id>
    </interactant>
    <interactant intactId="EBI-10987518">
        <id>Q99959-2</id>
        <label>PKP2</label>
    </interactant>
    <organismsDiffer>false</organismsDiffer>
    <experiments>3</experiments>
</comment>
<comment type="interaction">
    <interactant intactId="EBI-744556">
        <id>Q96HB5</id>
    </interactant>
    <interactant intactId="EBI-726466">
        <id>O15496</id>
        <label>PLA2G10</label>
    </interactant>
    <organismsDiffer>false</organismsDiffer>
    <experiments>3</experiments>
</comment>
<comment type="interaction">
    <interactant intactId="EBI-744556">
        <id>Q96HB5</id>
    </interactant>
    <interactant intactId="EBI-2876622">
        <id>Q9UPG8</id>
        <label>PLAGL2</label>
    </interactant>
    <organismsDiffer>false</organismsDiffer>
    <experiments>3</experiments>
</comment>
<comment type="interaction">
    <interactant intactId="EBI-744556">
        <id>Q96HB5</id>
    </interactant>
    <interactant intactId="EBI-949255">
        <id>Q58EX7</id>
        <label>PLEKHG4</label>
    </interactant>
    <organismsDiffer>false</organismsDiffer>
    <experiments>3</experiments>
</comment>
<comment type="interaction">
    <interactant intactId="EBI-744556">
        <id>Q96HB5</id>
    </interactant>
    <interactant intactId="EBI-943588">
        <id>Q16633</id>
        <label>POU2AF1</label>
    </interactant>
    <organismsDiffer>false</organismsDiffer>
    <experiments>3</experiments>
</comment>
<comment type="interaction">
    <interactant intactId="EBI-744556">
        <id>Q96HB5</id>
    </interactant>
    <interactant intactId="EBI-11320284">
        <id>Q9NQX0</id>
        <label>PRDM6</label>
    </interactant>
    <organismsDiffer>false</organismsDiffer>
    <experiments>3</experiments>
</comment>
<comment type="interaction">
    <interactant intactId="EBI-744556">
        <id>Q96HB5</id>
    </interactant>
    <interactant intactId="EBI-752074">
        <id>P41219</id>
        <label>PRPH</label>
    </interactant>
    <organismsDiffer>false</organismsDiffer>
    <experiments>3</experiments>
</comment>
<comment type="interaction">
    <interactant intactId="EBI-744556">
        <id>Q96HB5</id>
    </interactant>
    <interactant intactId="EBI-399437">
        <id>P20339</id>
        <label>RAB5A</label>
    </interactant>
    <organismsDiffer>false</organismsDiffer>
    <experiments>3</experiments>
</comment>
<comment type="interaction">
    <interactant intactId="EBI-744556">
        <id>Q96HB5</id>
    </interactant>
    <interactant intactId="EBI-447043">
        <id>Q15276</id>
        <label>RABEP1</label>
    </interactant>
    <organismsDiffer>false</organismsDiffer>
    <experiments>3</experiments>
</comment>
<comment type="interaction">
    <interactant intactId="EBI-744556">
        <id>Q96HB5</id>
    </interactant>
    <interactant intactId="EBI-740343">
        <id>Q93062-3</id>
        <label>RBPMS</label>
    </interactant>
    <organismsDiffer>false</organismsDiffer>
    <experiments>3</experiments>
</comment>
<comment type="interaction">
    <interactant intactId="EBI-744556">
        <id>Q96HB5</id>
    </interactant>
    <interactant intactId="EBI-948076">
        <id>Q9P2R6</id>
        <label>RERE</label>
    </interactant>
    <organismsDiffer>false</organismsDiffer>
    <experiments>3</experiments>
</comment>
<comment type="interaction">
    <interactant intactId="EBI-744556">
        <id>Q96HB5</id>
    </interactant>
    <interactant intactId="EBI-726876">
        <id>Q6NUQ1</id>
        <label>RINT1</label>
    </interactant>
    <organismsDiffer>false</organismsDiffer>
    <experiments>3</experiments>
</comment>
<comment type="interaction">
    <interactant intactId="EBI-744556">
        <id>Q96HB5</id>
    </interactant>
    <interactant intactId="EBI-6257312">
        <id>Q9BVN2</id>
        <label>RUSC1</label>
    </interactant>
    <organismsDiffer>false</organismsDiffer>
    <experiments>3</experiments>
</comment>
<comment type="interaction">
    <interactant intactId="EBI-744556">
        <id>Q96HB5</id>
    </interactant>
    <interactant intactId="EBI-741237">
        <id>O60504</id>
        <label>SORBS3</label>
    </interactant>
    <organismsDiffer>false</organismsDiffer>
    <experiments>3</experiments>
</comment>
<comment type="interaction">
    <interactant intactId="EBI-744556">
        <id>Q96HB5</id>
    </interactant>
    <interactant intactId="EBI-11959123">
        <id>Q99932-2</id>
        <label>SPAG8</label>
    </interactant>
    <organismsDiffer>false</organismsDiffer>
    <experiments>3</experiments>
</comment>
<comment type="interaction">
    <interactant intactId="EBI-744556">
        <id>Q96HB5</id>
    </interactant>
    <interactant intactId="EBI-714135">
        <id>O75558</id>
        <label>STX11</label>
    </interactant>
    <organismsDiffer>false</organismsDiffer>
    <experiments>3</experiments>
</comment>
<comment type="interaction">
    <interactant intactId="EBI-744556">
        <id>Q96HB5</id>
    </interactant>
    <interactant intactId="EBI-1105213">
        <id>Q9UBB9</id>
        <label>TFIP11</label>
    </interactant>
    <organismsDiffer>false</organismsDiffer>
    <experiments>3</experiments>
</comment>
<comment type="interaction">
    <interactant intactId="EBI-744556">
        <id>Q96HB5</id>
    </interactant>
    <interactant intactId="EBI-11741437">
        <id>Q08117-2</id>
        <label>TLE5</label>
    </interactant>
    <organismsDiffer>false</organismsDiffer>
    <experiments>6</experiments>
</comment>
<comment type="interaction">
    <interactant intactId="EBI-744556">
        <id>Q96HB5</id>
    </interactant>
    <interactant intactId="EBI-396540">
        <id>Q12888</id>
        <label>TP53BP1</label>
    </interactant>
    <organismsDiffer>false</organismsDiffer>
    <experiments>3</experiments>
</comment>
<comment type="interaction">
    <interactant intactId="EBI-744556">
        <id>Q96HB5</id>
    </interactant>
    <interactant intactId="EBI-359224">
        <id>Q13077</id>
        <label>TRAF1</label>
    </interactant>
    <organismsDiffer>false</organismsDiffer>
    <experiments>3</experiments>
</comment>
<comment type="interaction">
    <interactant intactId="EBI-744556">
        <id>Q96HB5</id>
    </interactant>
    <interactant intactId="EBI-5235829">
        <id>Q8IWZ5</id>
        <label>TRIM42</label>
    </interactant>
    <organismsDiffer>false</organismsDiffer>
    <experiments>3</experiments>
</comment>
<comment type="interaction">
    <interactant intactId="EBI-744556">
        <id>Q96HB5</id>
    </interactant>
    <interactant intactId="EBI-742327">
        <id>Q15654</id>
        <label>TRIP6</label>
    </interactant>
    <organismsDiffer>false</organismsDiffer>
    <experiments>3</experiments>
</comment>
<comment type="interaction">
    <interactant intactId="EBI-744556">
        <id>Q96HB5</id>
    </interactant>
    <interactant intactId="EBI-12806590">
        <id>Q86WV8</id>
        <label>TSC1</label>
    </interactant>
    <organismsDiffer>false</organismsDiffer>
    <experiments>3</experiments>
</comment>
<comment type="interaction">
    <interactant intactId="EBI-744556">
        <id>Q96HB5</id>
    </interactant>
    <interactant intactId="EBI-10241197">
        <id>Q3SY00</id>
        <label>TSGA10IP</label>
    </interactant>
    <organismsDiffer>false</organismsDiffer>
    <experiments>3</experiments>
</comment>
<comment type="interaction">
    <interactant intactId="EBI-744556">
        <id>Q96HB5</id>
    </interactant>
    <interactant intactId="EBI-353844">
        <id>P08670</id>
        <label>VIM</label>
    </interactant>
    <organismsDiffer>false</organismsDiffer>
    <experiments>3</experiments>
</comment>
<comment type="interaction">
    <interactant intactId="EBI-744556">
        <id>Q96HB5</id>
    </interactant>
    <interactant intactId="EBI-11962760">
        <id>Q9NZV7</id>
        <label>ZIM2</label>
    </interactant>
    <organismsDiffer>false</organismsDiffer>
    <experiments>3</experiments>
</comment>
<comment type="interaction">
    <interactant intactId="EBI-744556">
        <id>Q96HB5</id>
    </interactant>
    <interactant intactId="EBI-7850213">
        <id>Q9UDW3</id>
        <label>ZMAT5</label>
    </interactant>
    <organismsDiffer>false</organismsDiffer>
    <experiments>3</experiments>
</comment>
<comment type="interaction">
    <interactant intactId="EBI-744556">
        <id>Q96HB5</id>
    </interactant>
    <interactant intactId="EBI-740727">
        <id>Q8TAU3</id>
        <label>ZNF417</label>
    </interactant>
    <organismsDiffer>false</organismsDiffer>
    <experiments>3</experiments>
</comment>
<comment type="interaction">
    <interactant intactId="EBI-744556">
        <id>Q96HB5</id>
    </interactant>
    <interactant intactId="EBI-11985915">
        <id>Q5T619</id>
        <label>ZNF648</label>
    </interactant>
    <organismsDiffer>false</organismsDiffer>
    <experiments>3</experiments>
</comment>
<comment type="interaction">
    <interactant intactId="EBI-744556">
        <id>Q96HB5</id>
    </interactant>
    <interactant intactId="EBI-527853">
        <id>Q9UGI0</id>
        <label>ZRANB1</label>
    </interactant>
    <organismsDiffer>false</organismsDiffer>
    <experiments>3</experiments>
</comment>
<comment type="interaction">
    <interactant intactId="EBI-744556">
        <id>Q96HB5</id>
    </interactant>
    <interactant intactId="EBI-25900580">
        <id>Q9Y649</id>
    </interactant>
    <organismsDiffer>false</organismsDiffer>
    <experiments>3</experiments>
</comment>
<comment type="interaction">
    <interactant intactId="EBI-10185348">
        <id>Q96HB5-4</id>
    </interactant>
    <interactant intactId="EBI-10171570">
        <id>Q68D86</id>
        <label>CCDC102B</label>
    </interactant>
    <organismsDiffer>false</organismsDiffer>
    <experiments>4</experiments>
</comment>
<comment type="interaction">
    <interactant intactId="EBI-10185348">
        <id>Q96HB5-4</id>
    </interactant>
    <interactant intactId="EBI-2808286">
        <id>Q2TAC2</id>
        <label>CCDC57</label>
    </interactant>
    <organismsDiffer>false</organismsDiffer>
    <experiments>3</experiments>
</comment>
<comment type="interaction">
    <interactant intactId="EBI-10185348">
        <id>Q96HB5-4</id>
    </interactant>
    <interactant intactId="EBI-743488">
        <id>Q96L14</id>
        <label>CEP170P1</label>
    </interactant>
    <organismsDiffer>false</organismsDiffer>
    <experiments>4</experiments>
</comment>
<comment type="interaction">
    <interactant intactId="EBI-10185348">
        <id>Q96HB5-4</id>
    </interactant>
    <interactant intactId="EBI-448974">
        <id>Q99418</id>
        <label>CYTH2</label>
    </interactant>
    <organismsDiffer>false</organismsDiffer>
    <experiments>4</experiments>
</comment>
<comment type="interaction">
    <interactant intactId="EBI-10185348">
        <id>Q96HB5-4</id>
    </interactant>
    <interactant intactId="EBI-741648">
        <id>O43739</id>
        <label>CYTH3</label>
    </interactant>
    <organismsDiffer>false</organismsDiffer>
    <experiments>3</experiments>
</comment>
<comment type="interaction">
    <interactant intactId="EBI-10185348">
        <id>Q96HB5-4</id>
    </interactant>
    <interactant intactId="EBI-2349927">
        <id>Q5JST6</id>
        <label>EFHC2</label>
    </interactant>
    <organismsDiffer>false</organismsDiffer>
    <experiments>4</experiments>
</comment>
<comment type="interaction">
    <interactant intactId="EBI-10185348">
        <id>Q96HB5-4</id>
    </interactant>
    <interactant intactId="EBI-948001">
        <id>Q15323</id>
        <label>KRT31</label>
    </interactant>
    <organismsDiffer>false</organismsDiffer>
    <experiments>4</experiments>
</comment>
<comment type="interaction">
    <interactant intactId="EBI-10185348">
        <id>Q96HB5-4</id>
    </interactant>
    <interactant intactId="EBI-10171697">
        <id>Q6A162</id>
        <label>KRT40</label>
    </interactant>
    <organismsDiffer>false</organismsDiffer>
    <experiments>4</experiments>
</comment>
<comment type="interaction">
    <interactant intactId="EBI-10185348">
        <id>Q96HB5-4</id>
    </interactant>
    <interactant intactId="EBI-10172526">
        <id>Q9UJV3-2</id>
        <label>MID2</label>
    </interactant>
    <organismsDiffer>false</organismsDiffer>
    <experiments>3</experiments>
</comment>
<comment type="interaction">
    <interactant intactId="EBI-10185348">
        <id>Q96HB5-4</id>
    </interactant>
    <interactant intactId="EBI-359224">
        <id>Q13077</id>
        <label>TRAF1</label>
    </interactant>
    <organismsDiffer>false</organismsDiffer>
    <experiments>4</experiments>
</comment>
<comment type="interaction">
    <interactant intactId="EBI-10185348">
        <id>Q96HB5-4</id>
    </interactant>
    <interactant intactId="EBI-739895">
        <id>Q8N6Y0</id>
        <label>USHBP1</label>
    </interactant>
    <organismsDiffer>false</organismsDiffer>
    <experiments>3</experiments>
</comment>
<comment type="subcellular location">
    <subcellularLocation>
        <location evidence="5">Cytoplasm</location>
        <location evidence="5">Cytoskeleton</location>
        <location evidence="5">Microtubule organizing center</location>
        <location evidence="5">Centrosome</location>
        <location evidence="5">Centriole</location>
    </subcellularLocation>
    <subcellularLocation>
        <location evidence="4">Cytoplasm</location>
    </subcellularLocation>
    <subcellularLocation>
        <location evidence="4">Cell projection</location>
        <location evidence="4">Neuron projection</location>
    </subcellularLocation>
    <subcellularLocation>
        <location evidence="4">Cell projection</location>
        <location evidence="4">Growth cone</location>
    </subcellularLocation>
    <subcellularLocation>
        <location evidence="4">Endosome</location>
    </subcellularLocation>
    <text evidence="4 5">Localizes to the subdistal appendages of mother centrioles and proximal ends of both centrioles in interphase cells (PubMed:28422092). Recruited to subdistal appendages by ODF2 (PubMed:28422092). In differentiating neuroblastoma cells, colocalizes with CYTH2 in both neurite shaft and growth cone areas (PubMed:25326380). Partially colocalizes with endosomes along neurites in differentiating neuroblastoma cells (PubMed:25326380).</text>
</comment>
<comment type="alternative products">
    <event type="alternative splicing"/>
    <isoform>
        <id>Q96HB5-1</id>
        <name>1</name>
        <sequence type="displayed"/>
    </isoform>
    <isoform>
        <id>Q96HB5-2</id>
        <name>2</name>
        <sequence type="described" ref="VSP_042859"/>
    </isoform>
    <isoform>
        <id>Q96HB5-3</id>
        <name>3</name>
        <sequence type="described" ref="VSP_047104"/>
    </isoform>
    <isoform>
        <id>Q96HB5-4</id>
        <name>4</name>
        <sequence type="described" ref="VSP_054527 VSP_047104"/>
    </isoform>
    <isoform>
        <id>Q96HB5-5</id>
        <name>5</name>
        <sequence type="described" ref="VSP_042859 VSP_047104"/>
    </isoform>
</comment>
<comment type="PTM">
    <text evidence="4">Ubiquitinated; interaction with CYTH2 may prevent ubiquitination.</text>
</comment>
<name>CC120_HUMAN</name>
<proteinExistence type="evidence at protein level"/>
<keyword id="KW-0025">Alternative splicing</keyword>
<keyword id="KW-0966">Cell projection</keyword>
<keyword id="KW-0175">Coiled coil</keyword>
<keyword id="KW-0963">Cytoplasm</keyword>
<keyword id="KW-0206">Cytoskeleton</keyword>
<keyword id="KW-0217">Developmental protein</keyword>
<keyword id="KW-0967">Endosome</keyword>
<keyword id="KW-0488">Methylation</keyword>
<keyword id="KW-0597">Phosphoprotein</keyword>
<keyword id="KW-1267">Proteomics identification</keyword>
<keyword id="KW-1185">Reference proteome</keyword>
<keyword id="KW-0832">Ubl conjugation</keyword>
<gene>
    <name type="primary">CCDC120</name>
    <name type="ORF">JM11</name>
</gene>